<dbReference type="EC" id="2.7.7.6" evidence="1"/>
<dbReference type="EMBL" id="U86688">
    <property type="protein sequence ID" value="AAC61666.1"/>
    <property type="molecule type" value="Genomic_DNA"/>
</dbReference>
<dbReference type="EMBL" id="CP001019">
    <property type="protein sequence ID" value="ACJ19048.1"/>
    <property type="status" value="ALT_INIT"/>
    <property type="molecule type" value="Genomic_DNA"/>
</dbReference>
<dbReference type="SMR" id="B6J270"/>
<dbReference type="KEGG" id="cbg:CbuG_1774"/>
<dbReference type="HOGENOM" id="CLU_000524_4_0_6"/>
<dbReference type="GO" id="GO:0000428">
    <property type="term" value="C:DNA-directed RNA polymerase complex"/>
    <property type="evidence" value="ECO:0007669"/>
    <property type="project" value="UniProtKB-KW"/>
</dbReference>
<dbReference type="GO" id="GO:0003677">
    <property type="term" value="F:DNA binding"/>
    <property type="evidence" value="ECO:0007669"/>
    <property type="project" value="UniProtKB-UniRule"/>
</dbReference>
<dbReference type="GO" id="GO:0003899">
    <property type="term" value="F:DNA-directed RNA polymerase activity"/>
    <property type="evidence" value="ECO:0007669"/>
    <property type="project" value="UniProtKB-UniRule"/>
</dbReference>
<dbReference type="GO" id="GO:0032549">
    <property type="term" value="F:ribonucleoside binding"/>
    <property type="evidence" value="ECO:0007669"/>
    <property type="project" value="InterPro"/>
</dbReference>
<dbReference type="GO" id="GO:0006351">
    <property type="term" value="P:DNA-templated transcription"/>
    <property type="evidence" value="ECO:0007669"/>
    <property type="project" value="UniProtKB-UniRule"/>
</dbReference>
<dbReference type="CDD" id="cd00653">
    <property type="entry name" value="RNA_pol_B_RPB2"/>
    <property type="match status" value="1"/>
</dbReference>
<dbReference type="FunFam" id="2.40.50.100:FF:000006">
    <property type="entry name" value="DNA-directed RNA polymerase subunit beta"/>
    <property type="match status" value="1"/>
</dbReference>
<dbReference type="FunFam" id="3.90.1110.10:FF:000001">
    <property type="entry name" value="DNA-directed RNA polymerase subunit beta"/>
    <property type="match status" value="1"/>
</dbReference>
<dbReference type="FunFam" id="3.90.1800.10:FF:000001">
    <property type="entry name" value="DNA-directed RNA polymerase subunit beta"/>
    <property type="match status" value="1"/>
</dbReference>
<dbReference type="Gene3D" id="2.40.50.100">
    <property type="match status" value="1"/>
</dbReference>
<dbReference type="Gene3D" id="2.40.50.150">
    <property type="match status" value="1"/>
</dbReference>
<dbReference type="Gene3D" id="3.90.1100.10">
    <property type="match status" value="2"/>
</dbReference>
<dbReference type="Gene3D" id="2.30.150.10">
    <property type="entry name" value="DNA-directed RNA polymerase, beta subunit, external 1 domain"/>
    <property type="match status" value="1"/>
</dbReference>
<dbReference type="Gene3D" id="2.40.270.10">
    <property type="entry name" value="DNA-directed RNA polymerase, subunit 2, domain 6"/>
    <property type="match status" value="1"/>
</dbReference>
<dbReference type="Gene3D" id="3.90.1800.10">
    <property type="entry name" value="RNA polymerase alpha subunit dimerisation domain"/>
    <property type="match status" value="1"/>
</dbReference>
<dbReference type="Gene3D" id="3.90.1110.10">
    <property type="entry name" value="RNA polymerase Rpb2, domain 2"/>
    <property type="match status" value="1"/>
</dbReference>
<dbReference type="HAMAP" id="MF_01321">
    <property type="entry name" value="RNApol_bact_RpoB"/>
    <property type="match status" value="1"/>
</dbReference>
<dbReference type="InterPro" id="IPR042107">
    <property type="entry name" value="DNA-dir_RNA_pol_bsu_ext_1_sf"/>
</dbReference>
<dbReference type="InterPro" id="IPR019462">
    <property type="entry name" value="DNA-dir_RNA_pol_bsu_external_1"/>
</dbReference>
<dbReference type="InterPro" id="IPR015712">
    <property type="entry name" value="DNA-dir_RNA_pol_su2"/>
</dbReference>
<dbReference type="InterPro" id="IPR007120">
    <property type="entry name" value="DNA-dir_RNAP_su2_dom"/>
</dbReference>
<dbReference type="InterPro" id="IPR037033">
    <property type="entry name" value="DNA-dir_RNAP_su2_hyb_sf"/>
</dbReference>
<dbReference type="InterPro" id="IPR010243">
    <property type="entry name" value="RNA_pol_bsu_bac"/>
</dbReference>
<dbReference type="InterPro" id="IPR007121">
    <property type="entry name" value="RNA_pol_bsu_CS"/>
</dbReference>
<dbReference type="InterPro" id="IPR007644">
    <property type="entry name" value="RNA_pol_bsu_protrusion"/>
</dbReference>
<dbReference type="InterPro" id="IPR007642">
    <property type="entry name" value="RNA_pol_Rpb2_2"/>
</dbReference>
<dbReference type="InterPro" id="IPR037034">
    <property type="entry name" value="RNA_pol_Rpb2_2_sf"/>
</dbReference>
<dbReference type="InterPro" id="IPR007645">
    <property type="entry name" value="RNA_pol_Rpb2_3"/>
</dbReference>
<dbReference type="InterPro" id="IPR007641">
    <property type="entry name" value="RNA_pol_Rpb2_7"/>
</dbReference>
<dbReference type="InterPro" id="IPR014724">
    <property type="entry name" value="RNA_pol_RPB2_OB-fold"/>
</dbReference>
<dbReference type="NCBIfam" id="NF001616">
    <property type="entry name" value="PRK00405.1"/>
    <property type="match status" value="1"/>
</dbReference>
<dbReference type="NCBIfam" id="TIGR02013">
    <property type="entry name" value="rpoB"/>
    <property type="match status" value="1"/>
</dbReference>
<dbReference type="PANTHER" id="PTHR20856">
    <property type="entry name" value="DNA-DIRECTED RNA POLYMERASE I SUBUNIT 2"/>
    <property type="match status" value="1"/>
</dbReference>
<dbReference type="Pfam" id="PF04563">
    <property type="entry name" value="RNA_pol_Rpb2_1"/>
    <property type="match status" value="1"/>
</dbReference>
<dbReference type="Pfam" id="PF04561">
    <property type="entry name" value="RNA_pol_Rpb2_2"/>
    <property type="match status" value="2"/>
</dbReference>
<dbReference type="Pfam" id="PF04565">
    <property type="entry name" value="RNA_pol_Rpb2_3"/>
    <property type="match status" value="1"/>
</dbReference>
<dbReference type="Pfam" id="PF10385">
    <property type="entry name" value="RNA_pol_Rpb2_45"/>
    <property type="match status" value="1"/>
</dbReference>
<dbReference type="Pfam" id="PF00562">
    <property type="entry name" value="RNA_pol_Rpb2_6"/>
    <property type="match status" value="1"/>
</dbReference>
<dbReference type="Pfam" id="PF04560">
    <property type="entry name" value="RNA_pol_Rpb2_7"/>
    <property type="match status" value="1"/>
</dbReference>
<dbReference type="SUPFAM" id="SSF64484">
    <property type="entry name" value="beta and beta-prime subunits of DNA dependent RNA-polymerase"/>
    <property type="match status" value="1"/>
</dbReference>
<dbReference type="PROSITE" id="PS01166">
    <property type="entry name" value="RNA_POL_BETA"/>
    <property type="match status" value="1"/>
</dbReference>
<accession>B6J270</accession>
<accession>O87903</accession>
<evidence type="ECO:0000255" key="1">
    <source>
        <dbReference type="HAMAP-Rule" id="MF_01321"/>
    </source>
</evidence>
<evidence type="ECO:0000305" key="2"/>
<feature type="chain" id="PRO_0000366031" description="DNA-directed RNA polymerase subunit beta">
    <location>
        <begin position="1"/>
        <end position="1375"/>
    </location>
</feature>
<reference key="1">
    <citation type="journal article" date="1998" name="Gene">
        <title>Determination of Coxiella burnetii rpoB sequence and its use for phylogenetic analysis.</title>
        <authorList>
            <person name="Mollet C."/>
            <person name="Drancourt M."/>
            <person name="Raoult D."/>
        </authorList>
    </citation>
    <scope>NUCLEOTIDE SEQUENCE [GENOMIC DNA]</scope>
</reference>
<reference key="2">
    <citation type="journal article" date="2009" name="Infect. Immun.">
        <title>Comparative genomics reveal extensive transposon-mediated genomic plasticity and diversity among potential effector proteins within the genus Coxiella.</title>
        <authorList>
            <person name="Beare P.A."/>
            <person name="Unsworth N."/>
            <person name="Andoh M."/>
            <person name="Voth D.E."/>
            <person name="Omsland A."/>
            <person name="Gilk S.D."/>
            <person name="Williams K.P."/>
            <person name="Sobral B.W."/>
            <person name="Kupko J.J. III"/>
            <person name="Porcella S.F."/>
            <person name="Samuel J.E."/>
            <person name="Heinzen R.A."/>
        </authorList>
    </citation>
    <scope>NUCLEOTIDE SEQUENCE [LARGE SCALE GENOMIC DNA]</scope>
    <source>
        <strain>CbuG_Q212</strain>
    </source>
</reference>
<comment type="function">
    <text evidence="1">DNA-dependent RNA polymerase catalyzes the transcription of DNA into RNA using the four ribonucleoside triphosphates as substrates.</text>
</comment>
<comment type="catalytic activity">
    <reaction evidence="1">
        <text>RNA(n) + a ribonucleoside 5'-triphosphate = RNA(n+1) + diphosphate</text>
        <dbReference type="Rhea" id="RHEA:21248"/>
        <dbReference type="Rhea" id="RHEA-COMP:14527"/>
        <dbReference type="Rhea" id="RHEA-COMP:17342"/>
        <dbReference type="ChEBI" id="CHEBI:33019"/>
        <dbReference type="ChEBI" id="CHEBI:61557"/>
        <dbReference type="ChEBI" id="CHEBI:140395"/>
        <dbReference type="EC" id="2.7.7.6"/>
    </reaction>
</comment>
<comment type="subunit">
    <text evidence="1">The RNAP catalytic core consists of 2 alpha, 1 beta, 1 beta' and 1 omega subunit. When a sigma factor is associated with the core the holoenzyme is formed, which can initiate transcription.</text>
</comment>
<comment type="similarity">
    <text evidence="1">Belongs to the RNA polymerase beta chain family.</text>
</comment>
<comment type="sequence caution" evidence="2">
    <conflict type="erroneous initiation">
        <sequence resource="EMBL-CDS" id="ACJ19048"/>
    </conflict>
</comment>
<proteinExistence type="inferred from homology"/>
<gene>
    <name evidence="1" type="primary">rpoB</name>
    <name type="ordered locus">CbuG_1774</name>
</gene>
<name>RPOB_COXB2</name>
<organism>
    <name type="scientific">Coxiella burnetii (strain CbuG_Q212)</name>
    <name type="common">Coxiella burnetii (strain Q212)</name>
    <dbReference type="NCBI Taxonomy" id="434923"/>
    <lineage>
        <taxon>Bacteria</taxon>
        <taxon>Pseudomonadati</taxon>
        <taxon>Pseudomonadota</taxon>
        <taxon>Gammaproteobacteria</taxon>
        <taxon>Legionellales</taxon>
        <taxon>Coxiellaceae</taxon>
        <taxon>Coxiella</taxon>
    </lineage>
</organism>
<protein>
    <recommendedName>
        <fullName evidence="1">DNA-directed RNA polymerase subunit beta</fullName>
        <shortName evidence="1">RNAP subunit beta</shortName>
        <ecNumber evidence="1">2.7.7.6</ecNumber>
    </recommendedName>
    <alternativeName>
        <fullName evidence="1">RNA polymerase subunit beta</fullName>
    </alternativeName>
    <alternativeName>
        <fullName evidence="1">Transcriptase subunit beta</fullName>
    </alternativeName>
</protein>
<keyword id="KW-0240">DNA-directed RNA polymerase</keyword>
<keyword id="KW-0548">Nucleotidyltransferase</keyword>
<keyword id="KW-0804">Transcription</keyword>
<keyword id="KW-0808">Transferase</keyword>
<sequence>MAQANSRSRNSATISYPEKRRARVNLGKREVEILKTPYLLETQIESYRKFLQKDIAAEKREDNGLHAAFKSVFPITSYSGYAVLEYVGYSLGGESTLFDVEECKLRGLTYAAPLKVNMRLVIYDKEAPAGKKAIKDIKEQEVYMGEIPLMTETGSLVINGTERVVVSQLHRSPGVFFEHDKGKTHSSGKLLYSARVIPYRGSWLDFEFDPKDCLFVRIDRRRKLPATVILRALGYDTEQILDMFYKTNHFHLNQETVTLDLIPQRLRGELAVVEIKDKKGKVIVEANRRISARHIRLIEKAEINKLELPDDYLYGKVIGKTIIDKETGEIIAHANEEITAELLKNLRATKTASLDTLYINEIECGPYVSDTLRLDTTTNQLEALVEIYRIMRPGEPPTKEAAESLFENLFFSPERYSLSAVGRMKFNRRVGRKELTGLDVLSKEDIVDVLRVLVDIRDGKGDVDDIDHLGNRRIRSVGEMAENQFRVGLVRVERAVKDRLSLADVENLMPQDLVNAKPVSAAIKEFFGSSQLSQFMDQNNPLSEITHKRRVSALGPGGLTRERAGFEVRDVHVTHYGRVCPIETPEGPNIGLINSLAVFARANEYGFLETPYRKVVDRVVTDETEYLSAIEEGDYYIAQANTNVDEKGRLVDDLISCRYKGEFTLTTPDKINYMDVSPRQIVSVAAALIPFLEHDDANRALMGSNMQRQAVPTIRPETPLVGTGMERTVAVDSGVTVIAKRSGVIDSVDASRIVVRVDRKETEDDDDIGVDIYNLTKFTRSNQNTCINQHPIVEVGDKVQKGDVLADGPSTDIGELALGQNLLVAFMPWNGYNFEDSILISERLVEEDRFTTIHIQEFTCVARDTKLGPEEITSDIPNVGESALAKLDESGIVHIGAEVNAGDILVGKVTPKGETQLTPEEKLLRAIFGEKASDVKDTSLRVTPGITGTVIDVRIFTREGVKKDERTLEIEKAELSKVEKDLNDELRVREDALFENLEKLLTGRVAAGGPNKLAKGTKITKSYLADLPRQKWFEIRLQDDAATKRLEASHEHFKELRETRDAKLKDSRQKLTQGGDLAPGVIKIVKVYLAVKRRIQPGDKMAGRHGNKGVISTIVPIEDMPYLEDGTPVDIVLNPLGVPSRMNIGQVLETHLGWAAKGLGKKIGEMIEKGADAKELRKSLKPIYDLSKTQRFDLEALEDPEIVMLAKNLRKGVPISSPVFDGATEEEIKQLLKMADLPTSGQAALYDGRTGKKFDRSVTVGYMYMLKLNHLVDDKMHARSTGSYSLVTQQPLGGKAQFGGQRFGEMEVWALEAYGAAYTLQEMLTVKSDDVAGRTRMYKNIVDGDHRMDAGMPESFNVLVKEIRSLAIDIGLEND</sequence>